<name>QUEF_CHESB</name>
<gene>
    <name evidence="1" type="primary">queF</name>
    <name type="ordered locus">Meso_0442</name>
</gene>
<proteinExistence type="inferred from homology"/>
<keyword id="KW-0963">Cytoplasm</keyword>
<keyword id="KW-0521">NADP</keyword>
<keyword id="KW-0560">Oxidoreductase</keyword>
<keyword id="KW-0671">Queuosine biosynthesis</keyword>
<evidence type="ECO:0000255" key="1">
    <source>
        <dbReference type="HAMAP-Rule" id="MF_00818"/>
    </source>
</evidence>
<evidence type="ECO:0000256" key="2">
    <source>
        <dbReference type="SAM" id="MobiDB-lite"/>
    </source>
</evidence>
<comment type="function">
    <text evidence="1">Catalyzes the NADPH-dependent reduction of 7-cyano-7-deazaguanine (preQ0) to 7-aminomethyl-7-deazaguanine (preQ1).</text>
</comment>
<comment type="catalytic activity">
    <reaction evidence="1">
        <text>7-aminomethyl-7-carbaguanine + 2 NADP(+) = 7-cyano-7-deazaguanine + 2 NADPH + 3 H(+)</text>
        <dbReference type="Rhea" id="RHEA:13409"/>
        <dbReference type="ChEBI" id="CHEBI:15378"/>
        <dbReference type="ChEBI" id="CHEBI:45075"/>
        <dbReference type="ChEBI" id="CHEBI:57783"/>
        <dbReference type="ChEBI" id="CHEBI:58349"/>
        <dbReference type="ChEBI" id="CHEBI:58703"/>
        <dbReference type="EC" id="1.7.1.13"/>
    </reaction>
</comment>
<comment type="pathway">
    <text evidence="1">tRNA modification; tRNA-queuosine biosynthesis.</text>
</comment>
<comment type="subcellular location">
    <subcellularLocation>
        <location evidence="1">Cytoplasm</location>
    </subcellularLocation>
</comment>
<comment type="similarity">
    <text evidence="1">Belongs to the GTP cyclohydrolase I family. QueF type 1 subfamily.</text>
</comment>
<protein>
    <recommendedName>
        <fullName evidence="1">NADPH-dependent 7-cyano-7-deazaguanine reductase</fullName>
        <ecNumber evidence="1">1.7.1.13</ecNumber>
    </recommendedName>
    <alternativeName>
        <fullName evidence="1">7-cyano-7-carbaguanine reductase</fullName>
    </alternativeName>
    <alternativeName>
        <fullName evidence="1">NADPH-dependent nitrile oxidoreductase</fullName>
    </alternativeName>
    <alternativeName>
        <fullName evidence="1">PreQ(0) reductase</fullName>
    </alternativeName>
</protein>
<organism>
    <name type="scientific">Chelativorans sp. (strain BNC1)</name>
    <dbReference type="NCBI Taxonomy" id="266779"/>
    <lineage>
        <taxon>Bacteria</taxon>
        <taxon>Pseudomonadati</taxon>
        <taxon>Pseudomonadota</taxon>
        <taxon>Alphaproteobacteria</taxon>
        <taxon>Hyphomicrobiales</taxon>
        <taxon>Phyllobacteriaceae</taxon>
        <taxon>Chelativorans</taxon>
    </lineage>
</organism>
<accession>Q11L79</accession>
<reference key="1">
    <citation type="submission" date="2006-06" db="EMBL/GenBank/DDBJ databases">
        <title>Complete sequence of chromosome of Mesorhizobium sp. BNC1.</title>
        <authorList>
            <consortium name="US DOE Joint Genome Institute"/>
            <person name="Copeland A."/>
            <person name="Lucas S."/>
            <person name="Lapidus A."/>
            <person name="Barry K."/>
            <person name="Detter J.C."/>
            <person name="Glavina del Rio T."/>
            <person name="Hammon N."/>
            <person name="Israni S."/>
            <person name="Dalin E."/>
            <person name="Tice H."/>
            <person name="Pitluck S."/>
            <person name="Chertkov O."/>
            <person name="Brettin T."/>
            <person name="Bruce D."/>
            <person name="Han C."/>
            <person name="Tapia R."/>
            <person name="Gilna P."/>
            <person name="Schmutz J."/>
            <person name="Larimer F."/>
            <person name="Land M."/>
            <person name="Hauser L."/>
            <person name="Kyrpides N."/>
            <person name="Mikhailova N."/>
            <person name="Richardson P."/>
        </authorList>
    </citation>
    <scope>NUCLEOTIDE SEQUENCE [LARGE SCALE GENOMIC DNA]</scope>
    <source>
        <strain>BNC1</strain>
    </source>
</reference>
<sequence>MTDTRNLTQLGSKTQAPASPEAATLETAPFSRGDGPAAIVRFTCPEFTSLCPVTGQPDFAHIVIDYAPDKLLVESKSLKLFLTSFRNHGAFHEDCTVMIGRRIVEATKPLWLRIGGYWYPRGGIPIDVFWQTGTPPKDAWVPETGVPPYRGRG</sequence>
<dbReference type="EC" id="1.7.1.13" evidence="1"/>
<dbReference type="EMBL" id="CP000390">
    <property type="protein sequence ID" value="ABG61846.1"/>
    <property type="molecule type" value="Genomic_DNA"/>
</dbReference>
<dbReference type="SMR" id="Q11L79"/>
<dbReference type="STRING" id="266779.Meso_0442"/>
<dbReference type="KEGG" id="mes:Meso_0442"/>
<dbReference type="eggNOG" id="COG0780">
    <property type="taxonomic scope" value="Bacteria"/>
</dbReference>
<dbReference type="HOGENOM" id="CLU_102489_0_1_5"/>
<dbReference type="OrthoDB" id="9789995at2"/>
<dbReference type="UniPathway" id="UPA00392"/>
<dbReference type="GO" id="GO:0005737">
    <property type="term" value="C:cytoplasm"/>
    <property type="evidence" value="ECO:0007669"/>
    <property type="project" value="UniProtKB-SubCell"/>
</dbReference>
<dbReference type="GO" id="GO:0033739">
    <property type="term" value="F:preQ1 synthase activity"/>
    <property type="evidence" value="ECO:0007669"/>
    <property type="project" value="UniProtKB-UniRule"/>
</dbReference>
<dbReference type="GO" id="GO:0008616">
    <property type="term" value="P:queuosine biosynthetic process"/>
    <property type="evidence" value="ECO:0007669"/>
    <property type="project" value="UniProtKB-UniRule"/>
</dbReference>
<dbReference type="GO" id="GO:0006400">
    <property type="term" value="P:tRNA modification"/>
    <property type="evidence" value="ECO:0007669"/>
    <property type="project" value="UniProtKB-UniRule"/>
</dbReference>
<dbReference type="Gene3D" id="3.30.1130.10">
    <property type="match status" value="1"/>
</dbReference>
<dbReference type="HAMAP" id="MF_00818">
    <property type="entry name" value="QueF_type1"/>
    <property type="match status" value="1"/>
</dbReference>
<dbReference type="InterPro" id="IPR043133">
    <property type="entry name" value="GTP-CH-I_C/QueF"/>
</dbReference>
<dbReference type="InterPro" id="IPR050084">
    <property type="entry name" value="NADPH_dep_7-cyano-7-deazaG_red"/>
</dbReference>
<dbReference type="InterPro" id="IPR029500">
    <property type="entry name" value="QueF"/>
</dbReference>
<dbReference type="InterPro" id="IPR016856">
    <property type="entry name" value="QueF_type1"/>
</dbReference>
<dbReference type="NCBIfam" id="TIGR03139">
    <property type="entry name" value="QueF-II"/>
    <property type="match status" value="1"/>
</dbReference>
<dbReference type="PANTHER" id="PTHR34354">
    <property type="entry name" value="NADPH-DEPENDENT 7-CYANO-7-DEAZAGUANINE REDUCTASE"/>
    <property type="match status" value="1"/>
</dbReference>
<dbReference type="PANTHER" id="PTHR34354:SF1">
    <property type="entry name" value="NADPH-DEPENDENT 7-CYANO-7-DEAZAGUANINE REDUCTASE"/>
    <property type="match status" value="1"/>
</dbReference>
<dbReference type="Pfam" id="PF14489">
    <property type="entry name" value="QueF"/>
    <property type="match status" value="1"/>
</dbReference>
<dbReference type="PIRSF" id="PIRSF027377">
    <property type="entry name" value="Nitrile_oxidored_QueF"/>
    <property type="match status" value="1"/>
</dbReference>
<dbReference type="SUPFAM" id="SSF55620">
    <property type="entry name" value="Tetrahydrobiopterin biosynthesis enzymes-like"/>
    <property type="match status" value="1"/>
</dbReference>
<feature type="chain" id="PRO_1000062393" description="NADPH-dependent 7-cyano-7-deazaguanine reductase">
    <location>
        <begin position="1"/>
        <end position="153"/>
    </location>
</feature>
<feature type="region of interest" description="Disordered" evidence="2">
    <location>
        <begin position="1"/>
        <end position="23"/>
    </location>
</feature>
<feature type="compositionally biased region" description="Polar residues" evidence="2">
    <location>
        <begin position="1"/>
        <end position="17"/>
    </location>
</feature>
<feature type="active site" description="Thioimide intermediate" evidence="1">
    <location>
        <position position="51"/>
    </location>
</feature>
<feature type="active site" description="Proton donor" evidence="1">
    <location>
        <position position="58"/>
    </location>
</feature>
<feature type="binding site" evidence="1">
    <location>
        <begin position="73"/>
        <end position="75"/>
    </location>
    <ligand>
        <name>substrate</name>
    </ligand>
</feature>
<feature type="binding site" evidence="1">
    <location>
        <begin position="92"/>
        <end position="93"/>
    </location>
    <ligand>
        <name>substrate</name>
    </ligand>
</feature>